<proteinExistence type="inferred from homology"/>
<dbReference type="EC" id="1.1.1.79" evidence="1"/>
<dbReference type="EC" id="1.1.1.81" evidence="1"/>
<dbReference type="EMBL" id="CP001113">
    <property type="protein sequence ID" value="ACF61368.1"/>
    <property type="molecule type" value="Genomic_DNA"/>
</dbReference>
<dbReference type="RefSeq" id="WP_000402551.1">
    <property type="nucleotide sequence ID" value="NZ_CCMR01000003.1"/>
</dbReference>
<dbReference type="SMR" id="B4T2W6"/>
<dbReference type="KEGG" id="see:SNSL254_A1230"/>
<dbReference type="HOGENOM" id="CLU_019796_1_0_6"/>
<dbReference type="Proteomes" id="UP000008824">
    <property type="component" value="Chromosome"/>
</dbReference>
<dbReference type="GO" id="GO:0005737">
    <property type="term" value="C:cytoplasm"/>
    <property type="evidence" value="ECO:0007669"/>
    <property type="project" value="UniProtKB-SubCell"/>
</dbReference>
<dbReference type="GO" id="GO:0030267">
    <property type="term" value="F:glyoxylate reductase (NADPH) activity"/>
    <property type="evidence" value="ECO:0007669"/>
    <property type="project" value="UniProtKB-UniRule"/>
</dbReference>
<dbReference type="GO" id="GO:0008465">
    <property type="term" value="F:hydroxypyruvate reductase (NADH) activity"/>
    <property type="evidence" value="ECO:0007669"/>
    <property type="project" value="RHEA"/>
</dbReference>
<dbReference type="GO" id="GO:0120509">
    <property type="term" value="F:hydroxypyruvate reductase (NADPH) activity"/>
    <property type="evidence" value="ECO:0007669"/>
    <property type="project" value="RHEA"/>
</dbReference>
<dbReference type="GO" id="GO:0051287">
    <property type="term" value="F:NAD binding"/>
    <property type="evidence" value="ECO:0007669"/>
    <property type="project" value="InterPro"/>
</dbReference>
<dbReference type="CDD" id="cd12164">
    <property type="entry name" value="GDH_like_2"/>
    <property type="match status" value="1"/>
</dbReference>
<dbReference type="FunFam" id="3.40.50.720:FF:000110">
    <property type="entry name" value="Glyoxylate/hydroxypyruvate reductase A"/>
    <property type="match status" value="1"/>
</dbReference>
<dbReference type="Gene3D" id="3.40.50.720">
    <property type="entry name" value="NAD(P)-binding Rossmann-like Domain"/>
    <property type="match status" value="2"/>
</dbReference>
<dbReference type="HAMAP" id="MF_01666">
    <property type="entry name" value="2_Hacid_dh_C_GhrA"/>
    <property type="match status" value="1"/>
</dbReference>
<dbReference type="InterPro" id="IPR006140">
    <property type="entry name" value="D-isomer_DH_NAD-bd"/>
</dbReference>
<dbReference type="InterPro" id="IPR023514">
    <property type="entry name" value="GhrA_Enterobacterales"/>
</dbReference>
<dbReference type="InterPro" id="IPR036291">
    <property type="entry name" value="NAD(P)-bd_dom_sf"/>
</dbReference>
<dbReference type="NCBIfam" id="NF012013">
    <property type="entry name" value="PRK15469.1"/>
    <property type="match status" value="1"/>
</dbReference>
<dbReference type="PANTHER" id="PTHR43333">
    <property type="entry name" value="2-HACID_DH_C DOMAIN-CONTAINING PROTEIN"/>
    <property type="match status" value="1"/>
</dbReference>
<dbReference type="PANTHER" id="PTHR43333:SF1">
    <property type="entry name" value="D-ISOMER SPECIFIC 2-HYDROXYACID DEHYDROGENASE NAD-BINDING DOMAIN-CONTAINING PROTEIN"/>
    <property type="match status" value="1"/>
</dbReference>
<dbReference type="Pfam" id="PF02826">
    <property type="entry name" value="2-Hacid_dh_C"/>
    <property type="match status" value="1"/>
</dbReference>
<dbReference type="SUPFAM" id="SSF51735">
    <property type="entry name" value="NAD(P)-binding Rossmann-fold domains"/>
    <property type="match status" value="1"/>
</dbReference>
<sequence>MEIIFYHPTFNAAWWVNALEKALPHARVREWKVGDNNPADYALVWQPPVEMLAGRRLKAVFALGAGVDAILSKLNAHPEMLDASIPLFRLEDTGMGLQMQEYAVSQVLHWFRRFDDYQALKNQALWKPLPEYTREEFSVGIMGAGVLGAKVAESLQAWGFPLRCWSRSRKSWPGVESYVGREELHAFLNQTRVLINLLPNTAQTVGIINSELLDQLPDGAYVLNLARGVHVQEADLLAALDSGKLKGAMLDVFSQEPLPQESPLWRHPRVAMTPHIAAVTRPAEAIDYISRTITQLEKGEPVTGQVDRARGY</sequence>
<protein>
    <recommendedName>
        <fullName evidence="1">Glyoxylate/hydroxypyruvate reductase A</fullName>
        <ecNumber evidence="1">1.1.1.79</ecNumber>
        <ecNumber evidence="1">1.1.1.81</ecNumber>
    </recommendedName>
    <alternativeName>
        <fullName evidence="1">2-ketoacid reductase</fullName>
    </alternativeName>
</protein>
<comment type="function">
    <text evidence="1">Catalyzes the NADPH-dependent reduction of glyoxylate and hydroxypyruvate into glycolate and glycerate, respectively.</text>
</comment>
<comment type="catalytic activity">
    <reaction evidence="1">
        <text>glycolate + NADP(+) = glyoxylate + NADPH + H(+)</text>
        <dbReference type="Rhea" id="RHEA:10992"/>
        <dbReference type="ChEBI" id="CHEBI:15378"/>
        <dbReference type="ChEBI" id="CHEBI:29805"/>
        <dbReference type="ChEBI" id="CHEBI:36655"/>
        <dbReference type="ChEBI" id="CHEBI:57783"/>
        <dbReference type="ChEBI" id="CHEBI:58349"/>
        <dbReference type="EC" id="1.1.1.79"/>
    </reaction>
</comment>
<comment type="catalytic activity">
    <reaction evidence="1">
        <text>(R)-glycerate + NAD(+) = 3-hydroxypyruvate + NADH + H(+)</text>
        <dbReference type="Rhea" id="RHEA:17905"/>
        <dbReference type="ChEBI" id="CHEBI:15378"/>
        <dbReference type="ChEBI" id="CHEBI:16659"/>
        <dbReference type="ChEBI" id="CHEBI:17180"/>
        <dbReference type="ChEBI" id="CHEBI:57540"/>
        <dbReference type="ChEBI" id="CHEBI:57945"/>
        <dbReference type="EC" id="1.1.1.81"/>
    </reaction>
</comment>
<comment type="catalytic activity">
    <reaction evidence="1">
        <text>(R)-glycerate + NADP(+) = 3-hydroxypyruvate + NADPH + H(+)</text>
        <dbReference type="Rhea" id="RHEA:18657"/>
        <dbReference type="ChEBI" id="CHEBI:15378"/>
        <dbReference type="ChEBI" id="CHEBI:16659"/>
        <dbReference type="ChEBI" id="CHEBI:17180"/>
        <dbReference type="ChEBI" id="CHEBI:57783"/>
        <dbReference type="ChEBI" id="CHEBI:58349"/>
        <dbReference type="EC" id="1.1.1.81"/>
    </reaction>
</comment>
<comment type="subcellular location">
    <subcellularLocation>
        <location evidence="1">Cytoplasm</location>
    </subcellularLocation>
</comment>
<comment type="similarity">
    <text evidence="1">Belongs to the D-isomer specific 2-hydroxyacid dehydrogenase family. GhrA subfamily.</text>
</comment>
<name>GHRA_SALNS</name>
<evidence type="ECO:0000255" key="1">
    <source>
        <dbReference type="HAMAP-Rule" id="MF_01666"/>
    </source>
</evidence>
<gene>
    <name evidence="1" type="primary">ghrA</name>
    <name type="ordered locus">SNSL254_A1230</name>
</gene>
<keyword id="KW-0963">Cytoplasm</keyword>
<keyword id="KW-0520">NAD</keyword>
<keyword id="KW-0521">NADP</keyword>
<keyword id="KW-0560">Oxidoreductase</keyword>
<accession>B4T2W6</accession>
<reference key="1">
    <citation type="journal article" date="2011" name="J. Bacteriol.">
        <title>Comparative genomics of 28 Salmonella enterica isolates: evidence for CRISPR-mediated adaptive sublineage evolution.</title>
        <authorList>
            <person name="Fricke W.F."/>
            <person name="Mammel M.K."/>
            <person name="McDermott P.F."/>
            <person name="Tartera C."/>
            <person name="White D.G."/>
            <person name="Leclerc J.E."/>
            <person name="Ravel J."/>
            <person name="Cebula T.A."/>
        </authorList>
    </citation>
    <scope>NUCLEOTIDE SEQUENCE [LARGE SCALE GENOMIC DNA]</scope>
    <source>
        <strain>SL254</strain>
    </source>
</reference>
<organism>
    <name type="scientific">Salmonella newport (strain SL254)</name>
    <dbReference type="NCBI Taxonomy" id="423368"/>
    <lineage>
        <taxon>Bacteria</taxon>
        <taxon>Pseudomonadati</taxon>
        <taxon>Pseudomonadota</taxon>
        <taxon>Gammaproteobacteria</taxon>
        <taxon>Enterobacterales</taxon>
        <taxon>Enterobacteriaceae</taxon>
        <taxon>Salmonella</taxon>
    </lineage>
</organism>
<feature type="chain" id="PRO_1000187278" description="Glyoxylate/hydroxypyruvate reductase A">
    <location>
        <begin position="1"/>
        <end position="312"/>
    </location>
</feature>
<feature type="active site" evidence="1">
    <location>
        <position position="227"/>
    </location>
</feature>
<feature type="active site" description="Proton donor" evidence="1">
    <location>
        <position position="275"/>
    </location>
</feature>